<sequence>MDDLKIILEFSAGAELLFGNIKRRQLFLDGHKKWTIANLLKWMHANILTERPELFLQGDTVRPGILVLINDTDWELLGELDYELQANDNVLFISTLHGG</sequence>
<organism>
    <name type="scientific">Drosophila pseudoobscura pseudoobscura</name>
    <name type="common">Fruit fly</name>
    <dbReference type="NCBI Taxonomy" id="46245"/>
    <lineage>
        <taxon>Eukaryota</taxon>
        <taxon>Metazoa</taxon>
        <taxon>Ecdysozoa</taxon>
        <taxon>Arthropoda</taxon>
        <taxon>Hexapoda</taxon>
        <taxon>Insecta</taxon>
        <taxon>Pterygota</taxon>
        <taxon>Neoptera</taxon>
        <taxon>Endopterygota</taxon>
        <taxon>Diptera</taxon>
        <taxon>Brachycera</taxon>
        <taxon>Muscomorpha</taxon>
        <taxon>Ephydroidea</taxon>
        <taxon>Drosophilidae</taxon>
        <taxon>Drosophila</taxon>
        <taxon>Sophophora</taxon>
    </lineage>
</organism>
<reference key="1">
    <citation type="journal article" date="2005" name="Genome Res.">
        <title>Comparative genome sequencing of Drosophila pseudoobscura: chromosomal, gene, and cis-element evolution.</title>
        <authorList>
            <person name="Richards S."/>
            <person name="Liu Y."/>
            <person name="Bettencourt B.R."/>
            <person name="Hradecky P."/>
            <person name="Letovsky S."/>
            <person name="Nielsen R."/>
            <person name="Thornton K."/>
            <person name="Hubisz M.J."/>
            <person name="Chen R."/>
            <person name="Meisel R.P."/>
            <person name="Couronne O."/>
            <person name="Hua S."/>
            <person name="Smith M.A."/>
            <person name="Zhang P."/>
            <person name="Liu J."/>
            <person name="Bussemaker H.J."/>
            <person name="van Batenburg M.F."/>
            <person name="Howells S.L."/>
            <person name="Scherer S.E."/>
            <person name="Sodergren E."/>
            <person name="Matthews B.B."/>
            <person name="Crosby M.A."/>
            <person name="Schroeder A.J."/>
            <person name="Ortiz-Barrientos D."/>
            <person name="Rives C.M."/>
            <person name="Metzker M.L."/>
            <person name="Muzny D.M."/>
            <person name="Scott G."/>
            <person name="Steffen D."/>
            <person name="Wheeler D.A."/>
            <person name="Worley K.C."/>
            <person name="Havlak P."/>
            <person name="Durbin K.J."/>
            <person name="Egan A."/>
            <person name="Gill R."/>
            <person name="Hume J."/>
            <person name="Morgan M.B."/>
            <person name="Miner G."/>
            <person name="Hamilton C."/>
            <person name="Huang Y."/>
            <person name="Waldron L."/>
            <person name="Verduzco D."/>
            <person name="Clerc-Blankenburg K.P."/>
            <person name="Dubchak I."/>
            <person name="Noor M.A.F."/>
            <person name="Anderson W."/>
            <person name="White K.P."/>
            <person name="Clark A.G."/>
            <person name="Schaeffer S.W."/>
            <person name="Gelbart W.M."/>
            <person name="Weinstock G.M."/>
            <person name="Gibbs R.A."/>
        </authorList>
    </citation>
    <scope>NUCLEOTIDE SEQUENCE [LARGE SCALE GENOMIC DNA]</scope>
    <source>
        <strain>MV2-25 / Tucson 14011-0121.94</strain>
    </source>
</reference>
<accession>B5DQK2</accession>
<evidence type="ECO:0000250" key="1">
    <source>
        <dbReference type="UniProtKB" id="Q7KU86"/>
    </source>
</evidence>
<evidence type="ECO:0000255" key="2">
    <source>
        <dbReference type="HAMAP-Rule" id="MF_03048"/>
    </source>
</evidence>
<comment type="function">
    <text evidence="2">Acts as a sulfur carrier required for 2-thiolation of mcm(5)S(2)U at tRNA wobble positions of cytosolic tRNA(Lys), tRNA(Glu) and tRNA(Gln). Serves as sulfur donor in tRNA 2-thiolation reaction by being thiocarboxylated (-COSH) at its C-terminus by MOCS3. The sulfur is then transferred to tRNA to form 2-thiolation of mcm(5)S(2)U. Also acts as a ubiquitin-like protein (UBL) that is covalently conjugated via an isopeptide bond to lysine residues of target proteins such as Prx2/Jafrac1, Ciao1, Eip71CD and GILT1. The thiocarboxylated form serves as substrate for conjugation and oxidative stress specifically induces the formation of UBL-protein conjugates.</text>
</comment>
<comment type="pathway">
    <text evidence="2">tRNA modification; 5-methoxycarbonylmethyl-2-thiouridine-tRNA biosynthesis.</text>
</comment>
<comment type="subunit">
    <text evidence="1">Interacts with cer.</text>
</comment>
<comment type="subcellular location">
    <subcellularLocation>
        <location evidence="2">Cytoplasm</location>
    </subcellularLocation>
</comment>
<comment type="PTM">
    <text evidence="2">C-terminal thiocarboxylation occurs in 2 steps, it is first acyl-adenylated (-COAMP) via the hesA/moeB/thiF part of the MOCS3 homolog, then thiocarboxylated (-COSH) via the rhodanese domain of the MOCS3 homolog.</text>
</comment>
<comment type="similarity">
    <text evidence="2">Belongs to the URM1 family.</text>
</comment>
<name>URM1_DROPS</name>
<keyword id="KW-0963">Cytoplasm</keyword>
<keyword id="KW-1017">Isopeptide bond</keyword>
<keyword id="KW-1185">Reference proteome</keyword>
<keyword id="KW-0819">tRNA processing</keyword>
<keyword id="KW-0833">Ubl conjugation pathway</keyword>
<gene>
    <name evidence="1" type="primary">Urm1</name>
    <name type="ORF">GA23607</name>
</gene>
<feature type="chain" id="PRO_0000367861" description="Ubiquitin-related modifier 1 homolog">
    <location>
        <begin position="1"/>
        <end position="99"/>
    </location>
</feature>
<feature type="modified residue" description="1-thioglycine" evidence="2">
    <location>
        <position position="99"/>
    </location>
</feature>
<feature type="cross-link" description="Glycyl lysine isopeptide (Gly-Lys) (interchain with K-? in acceptor proteins)" evidence="2">
    <location>
        <position position="99"/>
    </location>
</feature>
<dbReference type="EMBL" id="CH379069">
    <property type="protein sequence ID" value="EDY73421.1"/>
    <property type="molecule type" value="Genomic_DNA"/>
</dbReference>
<dbReference type="RefSeq" id="XP_002134794.1">
    <property type="nucleotide sequence ID" value="XM_002134758.2"/>
</dbReference>
<dbReference type="SMR" id="B5DQK2"/>
<dbReference type="FunCoup" id="B5DQK2">
    <property type="interactions" value="1437"/>
</dbReference>
<dbReference type="STRING" id="46245.B5DQK2"/>
<dbReference type="EnsemblMetazoa" id="FBtr0276264">
    <property type="protein sequence ID" value="FBpp0274702"/>
    <property type="gene ID" value="FBgn0245007"/>
</dbReference>
<dbReference type="GeneID" id="6900402"/>
<dbReference type="KEGG" id="dpo:6900402"/>
<dbReference type="CTD" id="81605"/>
<dbReference type="eggNOG" id="KOG4146">
    <property type="taxonomic scope" value="Eukaryota"/>
</dbReference>
<dbReference type="HOGENOM" id="CLU_148208_0_1_1"/>
<dbReference type="InParanoid" id="B5DQK2"/>
<dbReference type="OMA" id="DYELQPN"/>
<dbReference type="UniPathway" id="UPA00988"/>
<dbReference type="Proteomes" id="UP000001819">
    <property type="component" value="Chromosome X"/>
</dbReference>
<dbReference type="Bgee" id="FBgn0245007">
    <property type="expression patterns" value="Expressed in female reproductive system and 2 other cell types or tissues"/>
</dbReference>
<dbReference type="GO" id="GO:0005829">
    <property type="term" value="C:cytosol"/>
    <property type="evidence" value="ECO:0007669"/>
    <property type="project" value="UniProtKB-UniRule"/>
</dbReference>
<dbReference type="GO" id="GO:0032447">
    <property type="term" value="P:protein urmylation"/>
    <property type="evidence" value="ECO:0007669"/>
    <property type="project" value="UniProtKB-UniRule"/>
</dbReference>
<dbReference type="GO" id="GO:0034227">
    <property type="term" value="P:tRNA thio-modification"/>
    <property type="evidence" value="ECO:0007669"/>
    <property type="project" value="UniProtKB-UniRule"/>
</dbReference>
<dbReference type="GO" id="GO:0002098">
    <property type="term" value="P:tRNA wobble uridine modification"/>
    <property type="evidence" value="ECO:0007669"/>
    <property type="project" value="UniProtKB-UniRule"/>
</dbReference>
<dbReference type="CDD" id="cd01764">
    <property type="entry name" value="Ubl_Urm1"/>
    <property type="match status" value="1"/>
</dbReference>
<dbReference type="FunFam" id="3.10.20.30:FF:000021">
    <property type="entry name" value="Ubiquitin-related modifier 1"/>
    <property type="match status" value="1"/>
</dbReference>
<dbReference type="Gene3D" id="3.10.20.30">
    <property type="match status" value="1"/>
</dbReference>
<dbReference type="HAMAP" id="MF_03048">
    <property type="entry name" value="Urm1"/>
    <property type="match status" value="1"/>
</dbReference>
<dbReference type="InterPro" id="IPR012675">
    <property type="entry name" value="Beta-grasp_dom_sf"/>
</dbReference>
<dbReference type="InterPro" id="IPR016155">
    <property type="entry name" value="Mopterin_synth/thiamin_S_b"/>
</dbReference>
<dbReference type="InterPro" id="IPR015221">
    <property type="entry name" value="Urm1"/>
</dbReference>
<dbReference type="PANTHER" id="PTHR14986">
    <property type="entry name" value="RURM1 PROTEIN"/>
    <property type="match status" value="1"/>
</dbReference>
<dbReference type="Pfam" id="PF09138">
    <property type="entry name" value="Urm1"/>
    <property type="match status" value="1"/>
</dbReference>
<dbReference type="PIRSF" id="PIRSF037379">
    <property type="entry name" value="Ubiquitin-related_modifier_1"/>
    <property type="match status" value="1"/>
</dbReference>
<dbReference type="SUPFAM" id="SSF54285">
    <property type="entry name" value="MoaD/ThiS"/>
    <property type="match status" value="1"/>
</dbReference>
<proteinExistence type="inferred from homology"/>
<protein>
    <recommendedName>
        <fullName evidence="2">Ubiquitin-related modifier 1 homolog</fullName>
    </recommendedName>
</protein>